<name>GP_DOBV</name>
<protein>
    <recommendedName>
        <fullName>Envelopment polyprotein</fullName>
    </recommendedName>
    <alternativeName>
        <fullName evidence="1">Glycoprotein precursor</fullName>
    </alternativeName>
    <alternativeName>
        <fullName>M polyprotein</fullName>
    </alternativeName>
    <component>
        <recommendedName>
            <fullName evidence="1">Glycoprotein N</fullName>
            <shortName>Gn</shortName>
        </recommendedName>
        <alternativeName>
            <fullName>Glycoprotein G1</fullName>
        </alternativeName>
    </component>
    <component>
        <recommendedName>
            <fullName evidence="1">Glycoprotein C</fullName>
            <shortName>Gc</shortName>
        </recommendedName>
        <alternativeName>
            <fullName>Glycoprotein G2</fullName>
        </alternativeName>
    </component>
</protein>
<keyword id="KW-1072">Activation of host autophagy by virus</keyword>
<keyword id="KW-1015">Disulfide bond</keyword>
<keyword id="KW-1170">Fusion of virus membrane with host endosomal membrane</keyword>
<keyword id="KW-1168">Fusion of virus membrane with host membrane</keyword>
<keyword id="KW-0325">Glycoprotein</keyword>
<keyword id="KW-1038">Host endoplasmic reticulum</keyword>
<keyword id="KW-1040">Host Golgi apparatus</keyword>
<keyword id="KW-1043">Host membrane</keyword>
<keyword id="KW-1045">Host mitochondrion</keyword>
<keyword id="KW-0945">Host-virus interaction</keyword>
<keyword id="KW-1090">Inhibition of host innate immune response by virus</keyword>
<keyword id="KW-1097">Inhibition of host MAVS by virus</keyword>
<keyword id="KW-1113">Inhibition of host RLR pathway by virus</keyword>
<keyword id="KW-1110">Inhibition of host TRAFs by virus</keyword>
<keyword id="KW-0472">Membrane</keyword>
<keyword id="KW-0479">Metal-binding</keyword>
<keyword id="KW-0597">Phosphoprotein</keyword>
<keyword id="KW-0677">Repeat</keyword>
<keyword id="KW-0732">Signal</keyword>
<keyword id="KW-0812">Transmembrane</keyword>
<keyword id="KW-1133">Transmembrane helix</keyword>
<keyword id="KW-1161">Viral attachment to host cell</keyword>
<keyword id="KW-0261">Viral envelope protein</keyword>
<keyword id="KW-0899">Viral immunoevasion</keyword>
<keyword id="KW-1162">Viral penetration into host cytoplasm</keyword>
<keyword id="KW-0946">Virion</keyword>
<keyword id="KW-1164">Virus endocytosis by host</keyword>
<keyword id="KW-1160">Virus entry into host cell</keyword>
<keyword id="KW-0862">Zinc</keyword>
<keyword id="KW-0863">Zinc-finger</keyword>
<accession>Q806Y7</accession>
<organism>
    <name type="scientific">Dobrava-Belgrade orthohantavirus</name>
    <name type="common">DOBV</name>
    <name type="synonym">Dobrava virus</name>
    <dbReference type="NCBI Taxonomy" id="3052477"/>
    <lineage>
        <taxon>Viruses</taxon>
        <taxon>Riboviria</taxon>
        <taxon>Orthornavirae</taxon>
        <taxon>Negarnaviricota</taxon>
        <taxon>Polyploviricotina</taxon>
        <taxon>Ellioviricetes</taxon>
        <taxon>Bunyavirales</taxon>
        <taxon>Hantaviridae</taxon>
        <taxon>Mammantavirinae</taxon>
        <taxon>Orthohantavirus</taxon>
    </lineage>
</organism>
<feature type="signal peptide" evidence="6">
    <location>
        <begin position="1"/>
        <end position="18"/>
    </location>
</feature>
<feature type="chain" id="PRO_0000455200" description="Envelopment polyprotein" evidence="1">
    <location>
        <begin position="19"/>
        <end position="1135"/>
    </location>
</feature>
<feature type="chain" id="PRO_0000455201" description="Glycoprotein N" evidence="1">
    <location>
        <begin position="19"/>
        <end position="648"/>
    </location>
</feature>
<feature type="chain" id="PRO_0000455202" description="Glycoprotein C" evidence="1">
    <location>
        <begin position="649"/>
        <end position="1135"/>
    </location>
</feature>
<feature type="topological domain" description="Lumenal" evidence="6">
    <location>
        <begin position="19"/>
        <end position="495"/>
    </location>
</feature>
<feature type="transmembrane region" description="Helical" evidence="6">
    <location>
        <begin position="496"/>
        <end position="516"/>
    </location>
</feature>
<feature type="topological domain" description="Cytoplasmic" evidence="6">
    <location>
        <begin position="517"/>
        <end position="627"/>
    </location>
</feature>
<feature type="transmembrane region" description="Helical" evidence="6">
    <location>
        <begin position="628"/>
        <end position="648"/>
    </location>
</feature>
<feature type="topological domain" description="Lumenal" evidence="6">
    <location>
        <begin position="649"/>
        <end position="1105"/>
    </location>
</feature>
<feature type="transmembrane region" description="Helical" evidence="6">
    <location>
        <begin position="1106"/>
        <end position="1126"/>
    </location>
</feature>
<feature type="topological domain" description="Cytoplasmic" evidence="6">
    <location>
        <begin position="1127"/>
        <end position="1135"/>
    </location>
</feature>
<feature type="domain" description="ITAM" evidence="7">
    <location>
        <begin position="611"/>
        <end position="634"/>
    </location>
</feature>
<feature type="zinc finger region" description="CCHC-type 1" evidence="5">
    <location>
        <begin position="545"/>
        <end position="565"/>
    </location>
</feature>
<feature type="zinc finger region" description="CCHC-type 2" evidence="5">
    <location>
        <begin position="570"/>
        <end position="591"/>
    </location>
</feature>
<feature type="region of interest" description="Binding to the ribonucleoprotein" evidence="5">
    <location>
        <begin position="516"/>
        <end position="533"/>
    </location>
</feature>
<feature type="region of interest" description="Binding to the ribonucleoprotein" evidence="3">
    <location>
        <begin position="588"/>
        <end position="605"/>
    </location>
</feature>
<feature type="region of interest" description="Binding to the ribonucleoprotein" evidence="5">
    <location>
        <begin position="592"/>
        <end position="603"/>
    </location>
</feature>
<feature type="region of interest" description="Binding to the ribonucleoprotein" evidence="3">
    <location>
        <begin position="611"/>
        <end position="625"/>
    </location>
</feature>
<feature type="region of interest" description="Fusion loop" evidence="4">
    <location>
        <begin position="757"/>
        <end position="777"/>
    </location>
</feature>
<feature type="region of interest" description="Binding to the ribonucleoprotein" evidence="3">
    <location>
        <begin position="1122"/>
        <end position="1135"/>
    </location>
</feature>
<feature type="short sequence motif" description="YxxL" evidence="1">
    <location>
        <begin position="615"/>
        <end position="618"/>
    </location>
</feature>
<feature type="site" description="Cleavage; by host signal peptidase" evidence="1">
    <location>
        <begin position="648"/>
        <end position="649"/>
    </location>
</feature>
<feature type="modified residue" description="Phosphotyrosine" evidence="7">
    <location>
        <position position="615"/>
    </location>
</feature>
<feature type="modified residue" description="Phosphotyrosine" evidence="7">
    <location>
        <position position="628"/>
    </location>
</feature>
<feature type="glycosylation site" description="N-linked (GlcNAc...) asparagine; by host" evidence="6">
    <location>
        <position position="134"/>
    </location>
</feature>
<feature type="glycosylation site" description="N-linked (GlcNAc...) asparagine; by host" evidence="6">
    <location>
        <position position="235"/>
    </location>
</feature>
<feature type="glycosylation site" description="N-linked (GlcNAc...) asparagine; by host" evidence="6">
    <location>
        <position position="347"/>
    </location>
</feature>
<feature type="glycosylation site" description="N-linked (GlcNAc...) asparagine; by host" evidence="6">
    <location>
        <position position="399"/>
    </location>
</feature>
<feature type="glycosylation site" description="N-linked (GlcNAc...) asparagine; by host" evidence="1">
    <location>
        <position position="928"/>
    </location>
</feature>
<feature type="disulfide bond" evidence="5">
    <location>
        <begin position="29"/>
        <end position="151"/>
    </location>
</feature>
<feature type="disulfide bond" evidence="5">
    <location>
        <begin position="63"/>
        <end position="157"/>
    </location>
</feature>
<feature type="disulfide bond" evidence="5">
    <location>
        <begin position="109"/>
        <end position="128"/>
    </location>
</feature>
<feature type="disulfide bond" evidence="5">
    <location>
        <begin position="133"/>
        <end position="138"/>
    </location>
</feature>
<feature type="disulfide bond" evidence="5">
    <location>
        <begin position="175"/>
        <end position="185"/>
    </location>
</feature>
<feature type="disulfide bond" evidence="5">
    <location>
        <begin position="210"/>
        <end position="247"/>
    </location>
</feature>
<feature type="disulfide bond" evidence="5">
    <location>
        <begin position="234"/>
        <end position="351"/>
    </location>
</feature>
<feature type="disulfide bond" evidence="5">
    <location>
        <begin position="376"/>
        <end position="435"/>
    </location>
</feature>
<feature type="disulfide bond" evidence="5">
    <location>
        <begin position="380"/>
        <end position="389"/>
    </location>
</feature>
<feature type="disulfide bond" evidence="5">
    <location>
        <begin position="405"/>
        <end position="424"/>
    </location>
</feature>
<feature type="disulfide bond" evidence="5">
    <location>
        <begin position="452"/>
        <end position="475"/>
    </location>
</feature>
<feature type="disulfide bond" evidence="1">
    <location>
        <begin position="735"/>
        <end position="770"/>
    </location>
</feature>
<feature type="disulfide bond" evidence="1">
    <location>
        <begin position="739"/>
        <end position="777"/>
    </location>
</feature>
<feature type="disulfide bond" evidence="1">
    <location>
        <begin position="751"/>
        <end position="885"/>
    </location>
</feature>
<feature type="disulfide bond" evidence="1">
    <location>
        <begin position="765"/>
        <end position="896"/>
    </location>
</feature>
<feature type="disulfide bond" evidence="1">
    <location>
        <begin position="780"/>
        <end position="904"/>
    </location>
</feature>
<feature type="disulfide bond" evidence="1">
    <location>
        <begin position="806"/>
        <end position="815"/>
    </location>
</feature>
<feature type="disulfide bond" evidence="1">
    <location>
        <begin position="823"/>
        <end position="832"/>
    </location>
</feature>
<feature type="disulfide bond" evidence="1">
    <location>
        <begin position="863"/>
        <end position="867"/>
    </location>
</feature>
<feature type="disulfide bond" evidence="1">
    <location>
        <begin position="970"/>
        <end position="1000"/>
    </location>
</feature>
<feature type="disulfide bond" evidence="1">
    <location>
        <begin position="993"/>
        <end position="1045"/>
    </location>
</feature>
<feature type="disulfide bond" evidence="1">
    <location>
        <begin position="1010"/>
        <end position="1015"/>
    </location>
</feature>
<feature type="disulfide bond" evidence="1">
    <location>
        <begin position="1046"/>
        <end position="1051"/>
    </location>
</feature>
<feature type="disulfide bond" evidence="5">
    <location>
        <begin position="1085"/>
        <end position="1089"/>
    </location>
</feature>
<reference key="1">
    <citation type="journal article" date="2002" name="Virus Res.">
        <title>Phylogenetic evidence for host switching in the evolution of hantaviruses carried by Apodemus mice.</title>
        <authorList>
            <person name="Nemirov K."/>
            <person name="Hentonnen H."/>
            <person name="Vaheri A."/>
            <person name="Plyusnin A."/>
        </authorList>
    </citation>
    <scope>NUCLEOTIDE SEQUENCE [GENOMIC RNA]</scope>
    <source>
        <strain evidence="10">DOBV/Ano-Poroia/Afl9/1999</strain>
    </source>
</reference>
<reference key="2">
    <citation type="journal article" date="2003" name="J. Med. Virol.">
        <title>Genetic characterization of new Dobrava hantavirus isolate from Greece.</title>
        <authorList>
            <person name="Nemirov K."/>
            <person name="Vapalahti O."/>
            <person name="Papa A."/>
            <person name="Plyusnina A."/>
            <person name="Lundkvist A."/>
            <person name="Antoniadis A."/>
            <person name="Plyusnin A."/>
        </authorList>
    </citation>
    <scope>NUCLEOTIDE SEQUENCE [GENOMIC RNA]</scope>
    <source>
        <strain evidence="9 10">DOBV/Ano-Poroia/Afl9/1999</strain>
    </source>
</reference>
<reference key="3">
    <citation type="journal article" date="2014" name="Viruses">
        <title>Hantavirus Gn and Gc envelope glycoproteins: key structural units for virus cell entry and virus assembly.</title>
        <authorList>
            <person name="Cifuentes-Munoz N."/>
            <person name="Salazar-Quiroz N."/>
            <person name="Tischler N.D."/>
        </authorList>
    </citation>
    <scope>REVIEW</scope>
</reference>
<proteinExistence type="inferred from homology"/>
<dbReference type="EMBL" id="AJ410616">
    <property type="protein sequence ID" value="CAC85164.1"/>
    <property type="molecule type" value="Genomic_RNA"/>
</dbReference>
<dbReference type="SMR" id="Q806Y7"/>
<dbReference type="GlyCosmos" id="Q806Y7">
    <property type="glycosylation" value="5 sites, No reported glycans"/>
</dbReference>
<dbReference type="KEGG" id="vg:2656264"/>
<dbReference type="Proteomes" id="UP000202548">
    <property type="component" value="Genome"/>
</dbReference>
<dbReference type="GO" id="GO:0044167">
    <property type="term" value="C:host cell endoplasmic reticulum membrane"/>
    <property type="evidence" value="ECO:0007669"/>
    <property type="project" value="UniProtKB-SubCell"/>
</dbReference>
<dbReference type="GO" id="GO:0044178">
    <property type="term" value="C:host cell Golgi membrane"/>
    <property type="evidence" value="ECO:0007669"/>
    <property type="project" value="UniProtKB-SubCell"/>
</dbReference>
<dbReference type="GO" id="GO:0033650">
    <property type="term" value="C:host cell mitochondrion"/>
    <property type="evidence" value="ECO:0007669"/>
    <property type="project" value="UniProtKB-SubCell"/>
</dbReference>
<dbReference type="GO" id="GO:0044228">
    <property type="term" value="C:host cell surface"/>
    <property type="evidence" value="ECO:0007669"/>
    <property type="project" value="UniProtKB-SubCell"/>
</dbReference>
<dbReference type="GO" id="GO:0016020">
    <property type="term" value="C:membrane"/>
    <property type="evidence" value="ECO:0007669"/>
    <property type="project" value="UniProtKB-KW"/>
</dbReference>
<dbReference type="GO" id="GO:0019031">
    <property type="term" value="C:viral envelope"/>
    <property type="evidence" value="ECO:0007669"/>
    <property type="project" value="UniProtKB-KW"/>
</dbReference>
<dbReference type="GO" id="GO:0055036">
    <property type="term" value="C:virion membrane"/>
    <property type="evidence" value="ECO:0007669"/>
    <property type="project" value="UniProtKB-SubCell"/>
</dbReference>
<dbReference type="GO" id="GO:0008270">
    <property type="term" value="F:zinc ion binding"/>
    <property type="evidence" value="ECO:0007669"/>
    <property type="project" value="UniProtKB-KW"/>
</dbReference>
<dbReference type="GO" id="GO:0075509">
    <property type="term" value="P:endocytosis involved in viral entry into host cell"/>
    <property type="evidence" value="ECO:0007669"/>
    <property type="project" value="UniProtKB-KW"/>
</dbReference>
<dbReference type="GO" id="GO:0039654">
    <property type="term" value="P:fusion of virus membrane with host endosome membrane"/>
    <property type="evidence" value="ECO:0007669"/>
    <property type="project" value="UniProtKB-KW"/>
</dbReference>
<dbReference type="GO" id="GO:0007165">
    <property type="term" value="P:signal transduction"/>
    <property type="evidence" value="ECO:0007669"/>
    <property type="project" value="InterPro"/>
</dbReference>
<dbReference type="GO" id="GO:0039520">
    <property type="term" value="P:symbiont-mediated activation of host autophagy"/>
    <property type="evidence" value="ECO:0007669"/>
    <property type="project" value="UniProtKB-KW"/>
</dbReference>
<dbReference type="GO" id="GO:0039545">
    <property type="term" value="P:symbiont-mediated suppression of host cytoplasmic pattern recognition receptor signaling pathway via inhibition of MAVS activity"/>
    <property type="evidence" value="ECO:0007669"/>
    <property type="project" value="UniProtKB-KW"/>
</dbReference>
<dbReference type="GO" id="GO:0039527">
    <property type="term" value="P:symbiont-mediated suppression of host TRAF-mediated signal transduction"/>
    <property type="evidence" value="ECO:0007669"/>
    <property type="project" value="UniProtKB-KW"/>
</dbReference>
<dbReference type="GO" id="GO:0019062">
    <property type="term" value="P:virion attachment to host cell"/>
    <property type="evidence" value="ECO:0007669"/>
    <property type="project" value="UniProtKB-KW"/>
</dbReference>
<dbReference type="Gene3D" id="1.10.8.1320">
    <property type="match status" value="1"/>
</dbReference>
<dbReference type="InterPro" id="IPR016402">
    <property type="entry name" value="Envelope_glycoprot_Hantavirus"/>
</dbReference>
<dbReference type="InterPro" id="IPR048791">
    <property type="entry name" value="Gc_C_bunya"/>
</dbReference>
<dbReference type="InterPro" id="IPR048790">
    <property type="entry name" value="Gn-B_hanta"/>
</dbReference>
<dbReference type="InterPro" id="IPR002532">
    <property type="entry name" value="Hanta_Gc_N"/>
</dbReference>
<dbReference type="InterPro" id="IPR002534">
    <property type="entry name" value="Hanta_Gn-H"/>
</dbReference>
<dbReference type="InterPro" id="IPR012316">
    <property type="entry name" value="ITAM_motif_hantavir-typ"/>
</dbReference>
<dbReference type="Pfam" id="PF20682">
    <property type="entry name" value="Hanta_Gc_C"/>
    <property type="match status" value="1"/>
</dbReference>
<dbReference type="Pfam" id="PF01561">
    <property type="entry name" value="Hanta_Gc_N"/>
    <property type="match status" value="1"/>
</dbReference>
<dbReference type="Pfam" id="PF20679">
    <property type="entry name" value="Hanta_Gn-B"/>
    <property type="match status" value="1"/>
</dbReference>
<dbReference type="Pfam" id="PF01567">
    <property type="entry name" value="Hanta_Gn-H"/>
    <property type="match status" value="1"/>
</dbReference>
<dbReference type="Pfam" id="PF10538">
    <property type="entry name" value="ITAM_Cys-rich"/>
    <property type="match status" value="1"/>
</dbReference>
<dbReference type="PIRSF" id="PIRSF003945">
    <property type="entry name" value="M_poly_HantaV"/>
    <property type="match status" value="1"/>
</dbReference>
<dbReference type="PROSITE" id="PS51056">
    <property type="entry name" value="ITAM_2"/>
    <property type="match status" value="1"/>
</dbReference>
<comment type="function">
    <molecule>Glycoprotein N</molecule>
    <text evidence="1 3">Forms homotetramers with glycoprotein C at the surface of the virion (By similarity). Attaches the virion to host cell receptors including integrin ITGAV/ITGB3 (By similarity). This attachment induces virion internalization predominantly through clathrin-dependent endocytosis (By similarity). Mediates the assembly and budding of infectious virus particles through its interaction with the nucleocapsid protein and the viral genome (By similarity). May dysregulate normal immune and endothelial cell responses through an ITAM motif (By similarity). Translocates to mitochondria, binds to host TUFM and recruits MAP1LC3B (By similarity). These interactions induce mitochondrial autophagy and therefore destruction of host MAVS leading to inhibition of type I interferon (IFN) responses (By similarity). Concomitant breakdown of glycoprotein N is apparently prevented by the nucleoprotein that may inhibit Gn-stimulated autophagosome-lysosome fusion (By similarity). Interacts with the viral genomic RNA (By similarity).</text>
</comment>
<comment type="function">
    <molecule>Glycoprotein C</molecule>
    <text evidence="1">Forms homotetramers with glycoprotein N at the surface of the virion. Attaches the virion to host cell receptors including integrin ITGAV/ITGB3. This attachment induces virion internalization predominantly through clathrin-dependent endocytosis. Class II fusion protein that promotes fusion of viral membrane with host endosomal membrane after endocytosis of the virion.</text>
</comment>
<comment type="subunit">
    <molecule>Glycoprotein N</molecule>
    <text evidence="1 2">Homodimer (By similarity). Homotetramer; forms heterotetrameric Gn-Gc spikes in the pre-fusion conformation (By similarity). Interacts (via C-terminus) with the nucleoprotein (By similarity). Interacts with host TUFM; this interaction contributes to the virus-induced degradation of mitochondria by autophagy, which leads to degradation of host MAVS and inhibition of type I interferon (IFN) responses (By similarity). Interacts with host MAP1LC3B; this interaction contributes to the virus-induced degradation of mitochondria by autophagy, which leads to degradation of host MAVS and inhibition of type I interferon (IFN) responses (By similarity).</text>
</comment>
<comment type="subunit">
    <molecule>Glycoprotein C</molecule>
    <text evidence="1 3">Homodimer. Homotetramer; forms heterotetrameric Gn-Gc spikes in the pre-fusion conformation. Homotrimer; forms homotrimer in the post-fusion conformation at acidic pH (By similarity). Interacts (via C-terminus) with the nucleoprotein (By similarity).</text>
</comment>
<comment type="subcellular location">
    <molecule>Glycoprotein N</molecule>
    <subcellularLocation>
        <location evidence="1">Virion membrane</location>
        <topology>Multi-pass membrane protein</topology>
    </subcellularLocation>
    <subcellularLocation>
        <location evidence="1">Host cell surface</location>
    </subcellularLocation>
    <subcellularLocation>
        <location evidence="1">Host Golgi apparatus membrane</location>
        <topology evidence="1">Multi-pass membrane protein</topology>
    </subcellularLocation>
    <subcellularLocation>
        <location evidence="1">Host endoplasmic reticulum membrane</location>
        <topology evidence="1">Multi-pass membrane protein</topology>
    </subcellularLocation>
    <subcellularLocation>
        <location evidence="1">Host mitochondrion</location>
    </subcellularLocation>
    <text evidence="3">Interaction between glycoprotein N and glycoprotein C is essential for proper targeting of glycoprotein N to the host Golgi complex, where virion budding occurs.</text>
</comment>
<comment type="subcellular location">
    <molecule>Glycoprotein C</molecule>
    <subcellularLocation>
        <location evidence="1">Virion membrane</location>
        <topology evidence="8">Single-pass type I membrane protein</topology>
    </subcellularLocation>
    <subcellularLocation>
        <location evidence="1">Host cell surface</location>
    </subcellularLocation>
    <subcellularLocation>
        <location evidence="1">Host Golgi apparatus membrane</location>
        <topology evidence="1">Single-pass type I membrane protein</topology>
    </subcellularLocation>
    <subcellularLocation>
        <location evidence="1">Host endoplasmic reticulum membrane</location>
        <topology evidence="1">Single-pass type I membrane protein</topology>
    </subcellularLocation>
    <text evidence="1 8">Budding probably takes place at the host Golgi (Probable). Glycoprotein C cytoplasmic tail is important for efficient Golgi localization (By similarity).</text>
</comment>
<comment type="domain">
    <molecule>Glycoprotein N</molecule>
    <text evidence="1 2 3 5">The YxxL motif at the C-terminus is indispensable for the interaction with MAP1LC3B and for the Gn-mediated induction of mitochondrial autophagy (By similarity). The cytoplasmic tail is involved in the inhibition of the host innate immune response (By similarity). The C-terminus of the cytoplasmic tail is involved in binding to the viral genome and the nucleocapsid (By similarity). Contains 2 contiguous zinc-fingers (By similarity).</text>
</comment>
<comment type="domain">
    <molecule>Glycoprotein C</molecule>
    <text evidence="3">The C-terminus is necessary for proper localization in the Golgi (By similarity). The cytoplasmic tail is involved in binding to the nucleocapsid (By similarity).</text>
</comment>
<comment type="PTM">
    <molecule>Envelopment polyprotein</molecule>
    <text evidence="1">Envelope polyprotein precursor is quickly cleaved in vivo just after synthesis, presumably by host signal peptidase.</text>
</comment>
<comment type="similarity">
    <text evidence="8">Belongs to the hantavirus envelope glycoprotein family.</text>
</comment>
<organismHost>
    <name type="scientific">Apodemus agrarius</name>
    <name type="common">Eurasian field mouse</name>
    <dbReference type="NCBI Taxonomy" id="39030"/>
</organismHost>
<organismHost>
    <name type="scientific">Apodemus flavicollis</name>
    <name type="common">Yellow-necked field mouse</name>
    <dbReference type="NCBI Taxonomy" id="54292"/>
</organismHost>
<organismHost>
    <name type="scientific">Apodemus ponticus</name>
    <name type="common">Caucasus field mouse</name>
    <dbReference type="NCBI Taxonomy" id="134909"/>
</organismHost>
<organismHost>
    <name type="scientific">Homo sapiens</name>
    <name type="common">Human</name>
    <dbReference type="NCBI Taxonomy" id="9606"/>
</organismHost>
<sequence length="1135" mass="125716">MIMWGLLLTMILIDFGASLRNVYDMKIECPHSINFGESSVTGKVELPPLLLTDAEALVPESSCNMDNHQSMSIIQKVTKVSWRKKADKAQAAKDSFETTSSEVNLKGTCALSHRMVEESYRNRRSVICYDLSCNSTHCKPTMHMIVPVHSCNMMKSCLVGLGPYRIQIVYERTYCTTGILTEGKCFVPDQSIVNVIKNGVFDIASVSIVCFFIRVKGTNYKIMASIKTATANNCNDTDNKVQGYYLCIVGGNSSPVYAPSTTDFRSMEALASLLRAPHGEDHDLSGEEVATYSIAGQIEGKIPHTANAANMLFTAFSGIPSYSSLSVFIGSQDGPVIYSPGLFPRLNQSSCDKIALPLIWEGYIDLPGYYETVHPCNVFCVLSGPGASCEAFSEGGIFNITSPTCLVSKQNRFRAAEQQVNFVCQRVDQDIVIYCNGQKKTILTKTLVIGQCIYSVTSLFSIMPGVAHSIAIELCVPGFHGWATAALLTTFCFGWILILSITLAVLVVLKFFAAILHNSSQENRFKIILRKIKEEFEKTKGSMVCEVCKYECETGKELKAHNLSCPQSQCPYCFTHCEPTESAFQAHYKVCQATHRFRDDLKKTITPQSTSPGCYRTLNLFRYKSRCYIFTVWVTLLIIESIMWAASASETVLEPSWNDNAHGVGVVPMHTDLELDFSLPSSSKYTYKRKLTSPLNQEQSVDLHIEIESQGISTSVHALGHWFDGRLNLKTSFHCYGACTKYEYPWHTAKCHFERDFEYENNWGCNPADCPGIGTGCTACGLYIDQLKPVGSAYKLITVRYSRKVCVQFGEENLCKTIDMNDCFVTRHVKVCIIGTVSKFSQGDTLVFLGPMEGGGLIFKDWCTSTCQFGDPGDIMSPKDKGFSCPDFTGHFRKKCNFATTPVCEYDGNMVSGYKKVMATIDSFQSFNTSSIHYTDERIEWKDPDGMLKDHLNILVTKDIDFENLGENPCKVGLQTSSIEGAWGSGVGFTLTCQISLTECSRFLTSIKACDMAICYGAQSVTLIRGQNTVKVSGKGGHSGSSFKCCHGTDCSQQGLQASAPHLDKVNGIVEQESEKVYDDGAPQCGISCWFVKSGEWITGIFNGNWIVIVVLVFFFILSLILLSLLCPIRKHKRS</sequence>
<evidence type="ECO:0000250" key="1">
    <source>
        <dbReference type="UniProtKB" id="P08668"/>
    </source>
</evidence>
<evidence type="ECO:0000250" key="2">
    <source>
        <dbReference type="UniProtKB" id="P0DTJ1"/>
    </source>
</evidence>
<evidence type="ECO:0000250" key="3">
    <source>
        <dbReference type="UniProtKB" id="P27312"/>
    </source>
</evidence>
<evidence type="ECO:0000250" key="4">
    <source>
        <dbReference type="UniProtKB" id="P41266"/>
    </source>
</evidence>
<evidence type="ECO:0000250" key="5">
    <source>
        <dbReference type="UniProtKB" id="Q9E006"/>
    </source>
</evidence>
<evidence type="ECO:0000255" key="6"/>
<evidence type="ECO:0000255" key="7">
    <source>
        <dbReference type="PROSITE-ProRule" id="PRU00379"/>
    </source>
</evidence>
<evidence type="ECO:0000305" key="8"/>
<evidence type="ECO:0000312" key="9">
    <source>
        <dbReference type="EMBL" id="CAC85164.1"/>
    </source>
</evidence>
<evidence type="ECO:0000312" key="10">
    <source>
        <dbReference type="Proteomes" id="UP000202548"/>
    </source>
</evidence>
<gene>
    <name type="primary">GP</name>
</gene>